<proteinExistence type="inferred from homology"/>
<keyword id="KW-1185">Reference proteome</keyword>
<keyword id="KW-0687">Ribonucleoprotein</keyword>
<keyword id="KW-0689">Ribosomal protein</keyword>
<keyword id="KW-0694">RNA-binding</keyword>
<keyword id="KW-0699">rRNA-binding</keyword>
<organism>
    <name type="scientific">Brucella abortus (strain 2308)</name>
    <dbReference type="NCBI Taxonomy" id="359391"/>
    <lineage>
        <taxon>Bacteria</taxon>
        <taxon>Pseudomonadati</taxon>
        <taxon>Pseudomonadota</taxon>
        <taxon>Alphaproteobacteria</taxon>
        <taxon>Hyphomicrobiales</taxon>
        <taxon>Brucellaceae</taxon>
        <taxon>Brucella/Ochrobactrum group</taxon>
        <taxon>Brucella</taxon>
    </lineage>
</organism>
<comment type="function">
    <text evidence="1">Located on the platform of the 30S subunit, it bridges several disparate RNA helices of the 16S rRNA. Forms part of the Shine-Dalgarno cleft in the 70S ribosome.</text>
</comment>
<comment type="subunit">
    <text evidence="1">Part of the 30S ribosomal subunit. Interacts with proteins S7 and S18. Binds to IF-3.</text>
</comment>
<comment type="similarity">
    <text evidence="1">Belongs to the universal ribosomal protein uS11 family.</text>
</comment>
<accession>Q2YRT9</accession>
<protein>
    <recommendedName>
        <fullName evidence="1">Small ribosomal subunit protein uS11</fullName>
    </recommendedName>
    <alternativeName>
        <fullName evidence="2">30S ribosomal protein S11</fullName>
    </alternativeName>
</protein>
<reference key="1">
    <citation type="journal article" date="2005" name="Infect. Immun.">
        <title>Whole-genome analyses of speciation events in pathogenic Brucellae.</title>
        <authorList>
            <person name="Chain P.S."/>
            <person name="Comerci D.J."/>
            <person name="Tolmasky M.E."/>
            <person name="Larimer F.W."/>
            <person name="Malfatti S.A."/>
            <person name="Vergez L.M."/>
            <person name="Aguero F."/>
            <person name="Land M.L."/>
            <person name="Ugalde R.A."/>
            <person name="Garcia E."/>
        </authorList>
    </citation>
    <scope>NUCLEOTIDE SEQUENCE [LARGE SCALE GENOMIC DNA]</scope>
    <source>
        <strain>2308</strain>
    </source>
</reference>
<evidence type="ECO:0000255" key="1">
    <source>
        <dbReference type="HAMAP-Rule" id="MF_01310"/>
    </source>
</evidence>
<evidence type="ECO:0000305" key="2"/>
<dbReference type="EMBL" id="AM040264">
    <property type="protein sequence ID" value="CAJ11188.1"/>
    <property type="molecule type" value="Genomic_DNA"/>
</dbReference>
<dbReference type="RefSeq" id="WP_002964339.1">
    <property type="nucleotide sequence ID" value="NZ_KN046823.1"/>
</dbReference>
<dbReference type="SMR" id="Q2YRT9"/>
<dbReference type="STRING" id="359391.BAB1_1232"/>
<dbReference type="GeneID" id="97533547"/>
<dbReference type="KEGG" id="bmf:BAB1_1232"/>
<dbReference type="PATRIC" id="fig|359391.11.peg.132"/>
<dbReference type="HOGENOM" id="CLU_072439_5_0_5"/>
<dbReference type="PhylomeDB" id="Q2YRT9"/>
<dbReference type="Proteomes" id="UP000002719">
    <property type="component" value="Chromosome I"/>
</dbReference>
<dbReference type="GO" id="GO:1990904">
    <property type="term" value="C:ribonucleoprotein complex"/>
    <property type="evidence" value="ECO:0007669"/>
    <property type="project" value="UniProtKB-KW"/>
</dbReference>
<dbReference type="GO" id="GO:0005840">
    <property type="term" value="C:ribosome"/>
    <property type="evidence" value="ECO:0007669"/>
    <property type="project" value="UniProtKB-KW"/>
</dbReference>
<dbReference type="GO" id="GO:0019843">
    <property type="term" value="F:rRNA binding"/>
    <property type="evidence" value="ECO:0007669"/>
    <property type="project" value="UniProtKB-UniRule"/>
</dbReference>
<dbReference type="GO" id="GO:0003735">
    <property type="term" value="F:structural constituent of ribosome"/>
    <property type="evidence" value="ECO:0007669"/>
    <property type="project" value="InterPro"/>
</dbReference>
<dbReference type="GO" id="GO:0006412">
    <property type="term" value="P:translation"/>
    <property type="evidence" value="ECO:0007669"/>
    <property type="project" value="UniProtKB-UniRule"/>
</dbReference>
<dbReference type="FunFam" id="3.30.420.80:FF:000001">
    <property type="entry name" value="30S ribosomal protein S11"/>
    <property type="match status" value="1"/>
</dbReference>
<dbReference type="Gene3D" id="3.30.420.80">
    <property type="entry name" value="Ribosomal protein S11"/>
    <property type="match status" value="1"/>
</dbReference>
<dbReference type="HAMAP" id="MF_01310">
    <property type="entry name" value="Ribosomal_uS11"/>
    <property type="match status" value="1"/>
</dbReference>
<dbReference type="InterPro" id="IPR001971">
    <property type="entry name" value="Ribosomal_uS11"/>
</dbReference>
<dbReference type="InterPro" id="IPR019981">
    <property type="entry name" value="Ribosomal_uS11_bac-type"/>
</dbReference>
<dbReference type="InterPro" id="IPR018102">
    <property type="entry name" value="Ribosomal_uS11_CS"/>
</dbReference>
<dbReference type="InterPro" id="IPR036967">
    <property type="entry name" value="Ribosomal_uS11_sf"/>
</dbReference>
<dbReference type="NCBIfam" id="NF003698">
    <property type="entry name" value="PRK05309.1"/>
    <property type="match status" value="1"/>
</dbReference>
<dbReference type="NCBIfam" id="TIGR03632">
    <property type="entry name" value="uS11_bact"/>
    <property type="match status" value="1"/>
</dbReference>
<dbReference type="PANTHER" id="PTHR11759">
    <property type="entry name" value="40S RIBOSOMAL PROTEIN S14/30S RIBOSOMAL PROTEIN S11"/>
    <property type="match status" value="1"/>
</dbReference>
<dbReference type="Pfam" id="PF00411">
    <property type="entry name" value="Ribosomal_S11"/>
    <property type="match status" value="1"/>
</dbReference>
<dbReference type="PIRSF" id="PIRSF002131">
    <property type="entry name" value="Ribosomal_S11"/>
    <property type="match status" value="1"/>
</dbReference>
<dbReference type="SUPFAM" id="SSF53137">
    <property type="entry name" value="Translational machinery components"/>
    <property type="match status" value="1"/>
</dbReference>
<dbReference type="PROSITE" id="PS00054">
    <property type="entry name" value="RIBOSOMAL_S11"/>
    <property type="match status" value="1"/>
</dbReference>
<gene>
    <name evidence="1" type="primary">rpsK</name>
    <name type="ordered locus">BAB1_1232</name>
</gene>
<feature type="chain" id="PRO_0000230389" description="Small ribosomal subunit protein uS11">
    <location>
        <begin position="1"/>
        <end position="129"/>
    </location>
</feature>
<name>RS11_BRUA2</name>
<sequence>MAKEATRVRRRERKNISSGVAHVNSTFNNTMITITDAQGNAIAWSSAGAQGFKGSRKSTPFAAQIAAEDCAKKAQEHGMRSLEVEVCGPGSGRESALRALQAAGFVITSIRDVTPIPHNGCRPRKKRRV</sequence>